<feature type="chain" id="PRO_0000297399" description="3-methyl-2-oxobutanoate hydroxymethyltransferase">
    <location>
        <begin position="1"/>
        <end position="261"/>
    </location>
</feature>
<feature type="active site" description="Proton acceptor" evidence="1">
    <location>
        <position position="179"/>
    </location>
</feature>
<feature type="binding site" evidence="1">
    <location>
        <begin position="42"/>
        <end position="43"/>
    </location>
    <ligand>
        <name>3-methyl-2-oxobutanoate</name>
        <dbReference type="ChEBI" id="CHEBI:11851"/>
    </ligand>
</feature>
<feature type="binding site" evidence="1">
    <location>
        <position position="42"/>
    </location>
    <ligand>
        <name>Mg(2+)</name>
        <dbReference type="ChEBI" id="CHEBI:18420"/>
    </ligand>
</feature>
<feature type="binding site" evidence="1">
    <location>
        <position position="81"/>
    </location>
    <ligand>
        <name>3-methyl-2-oxobutanoate</name>
        <dbReference type="ChEBI" id="CHEBI:11851"/>
    </ligand>
</feature>
<feature type="binding site" evidence="1">
    <location>
        <position position="81"/>
    </location>
    <ligand>
        <name>Mg(2+)</name>
        <dbReference type="ChEBI" id="CHEBI:18420"/>
    </ligand>
</feature>
<feature type="binding site" evidence="1">
    <location>
        <position position="110"/>
    </location>
    <ligand>
        <name>3-methyl-2-oxobutanoate</name>
        <dbReference type="ChEBI" id="CHEBI:11851"/>
    </ligand>
</feature>
<feature type="binding site" evidence="1">
    <location>
        <position position="112"/>
    </location>
    <ligand>
        <name>Mg(2+)</name>
        <dbReference type="ChEBI" id="CHEBI:18420"/>
    </ligand>
</feature>
<name>PANB_THET8</name>
<keyword id="KW-0963">Cytoplasm</keyword>
<keyword id="KW-0460">Magnesium</keyword>
<keyword id="KW-0479">Metal-binding</keyword>
<keyword id="KW-0566">Pantothenate biosynthesis</keyword>
<keyword id="KW-1185">Reference proteome</keyword>
<keyword id="KW-0808">Transferase</keyword>
<gene>
    <name evidence="1" type="primary">panB</name>
    <name type="ordered locus">TTHA0407</name>
</gene>
<dbReference type="EC" id="2.1.2.11" evidence="1"/>
<dbReference type="EMBL" id="AP008226">
    <property type="protein sequence ID" value="BAD70230.1"/>
    <property type="molecule type" value="Genomic_DNA"/>
</dbReference>
<dbReference type="RefSeq" id="WP_011227914.1">
    <property type="nucleotide sequence ID" value="NC_006461.1"/>
</dbReference>
<dbReference type="RefSeq" id="YP_143673.1">
    <property type="nucleotide sequence ID" value="NC_006461.1"/>
</dbReference>
<dbReference type="SMR" id="Q5SL86"/>
<dbReference type="EnsemblBacteria" id="BAD70230">
    <property type="protein sequence ID" value="BAD70230"/>
    <property type="gene ID" value="BAD70230"/>
</dbReference>
<dbReference type="GeneID" id="3168109"/>
<dbReference type="KEGG" id="ttj:TTHA0407"/>
<dbReference type="PATRIC" id="fig|300852.9.peg.407"/>
<dbReference type="eggNOG" id="COG0413">
    <property type="taxonomic scope" value="Bacteria"/>
</dbReference>
<dbReference type="HOGENOM" id="CLU_036645_1_0_0"/>
<dbReference type="PhylomeDB" id="Q5SL86"/>
<dbReference type="UniPathway" id="UPA00028">
    <property type="reaction ID" value="UER00003"/>
</dbReference>
<dbReference type="Proteomes" id="UP000000532">
    <property type="component" value="Chromosome"/>
</dbReference>
<dbReference type="GO" id="GO:0005737">
    <property type="term" value="C:cytoplasm"/>
    <property type="evidence" value="ECO:0007669"/>
    <property type="project" value="UniProtKB-SubCell"/>
</dbReference>
<dbReference type="GO" id="GO:0003864">
    <property type="term" value="F:3-methyl-2-oxobutanoate hydroxymethyltransferase activity"/>
    <property type="evidence" value="ECO:0007669"/>
    <property type="project" value="UniProtKB-UniRule"/>
</dbReference>
<dbReference type="GO" id="GO:0000287">
    <property type="term" value="F:magnesium ion binding"/>
    <property type="evidence" value="ECO:0007669"/>
    <property type="project" value="TreeGrafter"/>
</dbReference>
<dbReference type="GO" id="GO:0015940">
    <property type="term" value="P:pantothenate biosynthetic process"/>
    <property type="evidence" value="ECO:0007669"/>
    <property type="project" value="UniProtKB-UniRule"/>
</dbReference>
<dbReference type="CDD" id="cd06557">
    <property type="entry name" value="KPHMT-like"/>
    <property type="match status" value="1"/>
</dbReference>
<dbReference type="FunFam" id="3.20.20.60:FF:000003">
    <property type="entry name" value="3-methyl-2-oxobutanoate hydroxymethyltransferase"/>
    <property type="match status" value="1"/>
</dbReference>
<dbReference type="Gene3D" id="3.20.20.60">
    <property type="entry name" value="Phosphoenolpyruvate-binding domains"/>
    <property type="match status" value="1"/>
</dbReference>
<dbReference type="HAMAP" id="MF_00156">
    <property type="entry name" value="PanB"/>
    <property type="match status" value="1"/>
</dbReference>
<dbReference type="InterPro" id="IPR003700">
    <property type="entry name" value="Pantoate_hydroxy_MeTrfase"/>
</dbReference>
<dbReference type="InterPro" id="IPR015813">
    <property type="entry name" value="Pyrv/PenolPyrv_kinase-like_dom"/>
</dbReference>
<dbReference type="InterPro" id="IPR040442">
    <property type="entry name" value="Pyrv_kinase-like_dom_sf"/>
</dbReference>
<dbReference type="NCBIfam" id="TIGR00222">
    <property type="entry name" value="panB"/>
    <property type="match status" value="1"/>
</dbReference>
<dbReference type="NCBIfam" id="NF001452">
    <property type="entry name" value="PRK00311.1"/>
    <property type="match status" value="1"/>
</dbReference>
<dbReference type="PANTHER" id="PTHR20881">
    <property type="entry name" value="3-METHYL-2-OXOBUTANOATE HYDROXYMETHYLTRANSFERASE"/>
    <property type="match status" value="1"/>
</dbReference>
<dbReference type="PANTHER" id="PTHR20881:SF0">
    <property type="entry name" value="3-METHYL-2-OXOBUTANOATE HYDROXYMETHYLTRANSFERASE"/>
    <property type="match status" value="1"/>
</dbReference>
<dbReference type="Pfam" id="PF02548">
    <property type="entry name" value="Pantoate_transf"/>
    <property type="match status" value="1"/>
</dbReference>
<dbReference type="PIRSF" id="PIRSF000388">
    <property type="entry name" value="Pantoate_hydroxy_MeTrfase"/>
    <property type="match status" value="1"/>
</dbReference>
<dbReference type="SUPFAM" id="SSF51621">
    <property type="entry name" value="Phosphoenolpyruvate/pyruvate domain"/>
    <property type="match status" value="1"/>
</dbReference>
<reference key="1">
    <citation type="submission" date="2004-11" db="EMBL/GenBank/DDBJ databases">
        <title>Complete genome sequence of Thermus thermophilus HB8.</title>
        <authorList>
            <person name="Masui R."/>
            <person name="Kurokawa K."/>
            <person name="Nakagawa N."/>
            <person name="Tokunaga F."/>
            <person name="Koyama Y."/>
            <person name="Shibata T."/>
            <person name="Oshima T."/>
            <person name="Yokoyama S."/>
            <person name="Yasunaga T."/>
            <person name="Kuramitsu S."/>
        </authorList>
    </citation>
    <scope>NUCLEOTIDE SEQUENCE [LARGE SCALE GENOMIC DNA]</scope>
    <source>
        <strain>ATCC 27634 / DSM 579 / HB8</strain>
    </source>
</reference>
<accession>Q5SL86</accession>
<comment type="function">
    <text evidence="1">Catalyzes the reversible reaction in which hydroxymethyl group from 5,10-methylenetetrahydrofolate is transferred onto alpha-ketoisovalerate to form ketopantoate.</text>
</comment>
<comment type="catalytic activity">
    <reaction evidence="1">
        <text>3-methyl-2-oxobutanoate + (6R)-5,10-methylene-5,6,7,8-tetrahydrofolate + H2O = 2-dehydropantoate + (6S)-5,6,7,8-tetrahydrofolate</text>
        <dbReference type="Rhea" id="RHEA:11824"/>
        <dbReference type="ChEBI" id="CHEBI:11561"/>
        <dbReference type="ChEBI" id="CHEBI:11851"/>
        <dbReference type="ChEBI" id="CHEBI:15377"/>
        <dbReference type="ChEBI" id="CHEBI:15636"/>
        <dbReference type="ChEBI" id="CHEBI:57453"/>
        <dbReference type="EC" id="2.1.2.11"/>
    </reaction>
</comment>
<comment type="cofactor">
    <cofactor evidence="1">
        <name>Mg(2+)</name>
        <dbReference type="ChEBI" id="CHEBI:18420"/>
    </cofactor>
    <text evidence="1">Binds 1 Mg(2+) ion per subunit.</text>
</comment>
<comment type="pathway">
    <text evidence="1">Cofactor biosynthesis; (R)-pantothenate biosynthesis; (R)-pantoate from 3-methyl-2-oxobutanoate: step 1/2.</text>
</comment>
<comment type="subunit">
    <text evidence="1">Homodecamer; pentamer of dimers.</text>
</comment>
<comment type="subcellular location">
    <subcellularLocation>
        <location evidence="1">Cytoplasm</location>
    </subcellularLocation>
</comment>
<comment type="similarity">
    <text evidence="1">Belongs to the PanB family.</text>
</comment>
<sequence>MRRTVKDFRNAKGQRLVYLTAYDYPTARLAEAAGVDAILVGDSLGMVVLGYPSTVPVTLEEMLHHTKAARRGAPETFLVADLPYLAYATLDRALLAAERLLKEGGADAVKLEGGEEVAEIVQGLVRAGVPVLGHVGLTPQTASQLGGYKLQGRRPEEAERILKGALALEEAGAYGVVLEMVPARLAKEVTERLSVHTVGIGAGPHTDAQVLVFHDVVGLYGDFKPRFVKRYLEAGRLIQEALSRYAQEVREGVFPGEEHSF</sequence>
<organism>
    <name type="scientific">Thermus thermophilus (strain ATCC 27634 / DSM 579 / HB8)</name>
    <dbReference type="NCBI Taxonomy" id="300852"/>
    <lineage>
        <taxon>Bacteria</taxon>
        <taxon>Thermotogati</taxon>
        <taxon>Deinococcota</taxon>
        <taxon>Deinococci</taxon>
        <taxon>Thermales</taxon>
        <taxon>Thermaceae</taxon>
        <taxon>Thermus</taxon>
    </lineage>
</organism>
<protein>
    <recommendedName>
        <fullName evidence="1">3-methyl-2-oxobutanoate hydroxymethyltransferase</fullName>
        <ecNumber evidence="1">2.1.2.11</ecNumber>
    </recommendedName>
    <alternativeName>
        <fullName evidence="1">Ketopantoate hydroxymethyltransferase</fullName>
        <shortName evidence="1">KPHMT</shortName>
    </alternativeName>
</protein>
<evidence type="ECO:0000255" key="1">
    <source>
        <dbReference type="HAMAP-Rule" id="MF_00156"/>
    </source>
</evidence>
<proteinExistence type="inferred from homology"/>